<name>SERA_MYCTO</name>
<sequence>MSLPVVLIADKLAPSTVAALGDQVEVRWVDGPDRDKLLAAVPEADALLVRSATTVDAEVLAAAPKLKIVARAGVGLDNVDVDAATARGVLVVNAPTSNIHSAAEHALALLLAASRQIPAADASLREHTWKRSSFSGTEIFGKTVGVVGLGRIGQLVAQRIAAFGAYVVAYDPYVSPARAAQLGIELLSLDDLLARADFISVHLPKTPETAGLIDKEALAKTKPGVIIVNAARGGLVDEAALADAITGGHVRAAGLDVFATEPCTDSPLFELAQVVVTPHLGASTAEAQDRAGTDVAESVRLALAGEFVPDAVNVGGGVVNEEVAPWLDLVRKLGVLAGVLSDELPVSLSVQVRGELAAEEVEVLRLSALRGLFSAVIEDAVTFVNAPALAAERGVTAEICKASESPNHRSVVDVRAVGADGSVVTVSGTLYGPQLSQKIVQINGRHFDLRAQGINLIIHYVDRPGALGKIGTLLGTAGVNIQAAQLSEDAEGPGATILLRLDQDVPDDVRTAIAAAVDAYKLEVVDLS</sequence>
<dbReference type="EC" id="1.1.1.95" evidence="2"/>
<dbReference type="EC" id="1.1.1.399" evidence="2"/>
<dbReference type="EMBL" id="AE000516">
    <property type="protein sequence ID" value="AAK47403.1"/>
    <property type="molecule type" value="Genomic_DNA"/>
</dbReference>
<dbReference type="PIR" id="G70854">
    <property type="entry name" value="G70854"/>
</dbReference>
<dbReference type="RefSeq" id="WP_003899578.1">
    <property type="nucleotide sequence ID" value="NZ_KK341227.1"/>
</dbReference>
<dbReference type="SMR" id="P9WNX2"/>
<dbReference type="GeneID" id="45426986"/>
<dbReference type="KEGG" id="mtc:MT3074"/>
<dbReference type="PATRIC" id="fig|83331.31.peg.3316"/>
<dbReference type="HOGENOM" id="CLU_019796_8_1_11"/>
<dbReference type="UniPathway" id="UPA00135">
    <property type="reaction ID" value="UER00196"/>
</dbReference>
<dbReference type="Proteomes" id="UP000001020">
    <property type="component" value="Chromosome"/>
</dbReference>
<dbReference type="GO" id="GO:0051287">
    <property type="term" value="F:NAD binding"/>
    <property type="evidence" value="ECO:0007669"/>
    <property type="project" value="InterPro"/>
</dbReference>
<dbReference type="GO" id="GO:0004617">
    <property type="term" value="F:phosphoglycerate dehydrogenase activity"/>
    <property type="evidence" value="ECO:0007669"/>
    <property type="project" value="UniProtKB-EC"/>
</dbReference>
<dbReference type="GO" id="GO:0006564">
    <property type="term" value="P:L-serine biosynthetic process"/>
    <property type="evidence" value="ECO:0007669"/>
    <property type="project" value="UniProtKB-KW"/>
</dbReference>
<dbReference type="CDD" id="cd04902">
    <property type="entry name" value="ACT_3PGDH-xct"/>
    <property type="match status" value="1"/>
</dbReference>
<dbReference type="CDD" id="cd12173">
    <property type="entry name" value="PGDH_4"/>
    <property type="match status" value="1"/>
</dbReference>
<dbReference type="FunFam" id="3.30.1330.90:FF:000009">
    <property type="entry name" value="D-3-phosphoglycerate dehydrogenase"/>
    <property type="match status" value="1"/>
</dbReference>
<dbReference type="FunFam" id="3.30.70.260:FF:000081">
    <property type="entry name" value="D-3-phosphoglycerate dehydrogenase"/>
    <property type="match status" value="1"/>
</dbReference>
<dbReference type="FunFam" id="3.40.50.720:FF:000021">
    <property type="entry name" value="D-3-phosphoglycerate dehydrogenase"/>
    <property type="match status" value="1"/>
</dbReference>
<dbReference type="Gene3D" id="3.30.70.260">
    <property type="match status" value="1"/>
</dbReference>
<dbReference type="Gene3D" id="3.30.1330.90">
    <property type="entry name" value="D-3-phosphoglycerate dehydrogenase, domain 3"/>
    <property type="match status" value="1"/>
</dbReference>
<dbReference type="Gene3D" id="3.40.50.720">
    <property type="entry name" value="NAD(P)-binding Rossmann-like Domain"/>
    <property type="match status" value="2"/>
</dbReference>
<dbReference type="InterPro" id="IPR045865">
    <property type="entry name" value="ACT-like_dom_sf"/>
</dbReference>
<dbReference type="InterPro" id="IPR002912">
    <property type="entry name" value="ACT_dom"/>
</dbReference>
<dbReference type="InterPro" id="IPR029009">
    <property type="entry name" value="ASB_dom_sf"/>
</dbReference>
<dbReference type="InterPro" id="IPR050857">
    <property type="entry name" value="D-2-hydroxyacid_DH"/>
</dbReference>
<dbReference type="InterPro" id="IPR006139">
    <property type="entry name" value="D-isomer_2_OHA_DH_cat_dom"/>
</dbReference>
<dbReference type="InterPro" id="IPR029753">
    <property type="entry name" value="D-isomer_DH_CS"/>
</dbReference>
<dbReference type="InterPro" id="IPR029752">
    <property type="entry name" value="D-isomer_DH_CS1"/>
</dbReference>
<dbReference type="InterPro" id="IPR006140">
    <property type="entry name" value="D-isomer_DH_NAD-bd"/>
</dbReference>
<dbReference type="InterPro" id="IPR036291">
    <property type="entry name" value="NAD(P)-bd_dom_sf"/>
</dbReference>
<dbReference type="InterPro" id="IPR006236">
    <property type="entry name" value="PGDH"/>
</dbReference>
<dbReference type="InterPro" id="IPR045626">
    <property type="entry name" value="PGDH_ASB_dom"/>
</dbReference>
<dbReference type="NCBIfam" id="TIGR01327">
    <property type="entry name" value="PGDH"/>
    <property type="match status" value="1"/>
</dbReference>
<dbReference type="PANTHER" id="PTHR42789">
    <property type="entry name" value="D-ISOMER SPECIFIC 2-HYDROXYACID DEHYDROGENASE FAMILY PROTEIN (AFU_ORTHOLOGUE AFUA_6G10090)"/>
    <property type="match status" value="1"/>
</dbReference>
<dbReference type="PANTHER" id="PTHR42789:SF1">
    <property type="entry name" value="D-ISOMER SPECIFIC 2-HYDROXYACID DEHYDROGENASE FAMILY PROTEIN (AFU_ORTHOLOGUE AFUA_6G10090)"/>
    <property type="match status" value="1"/>
</dbReference>
<dbReference type="Pfam" id="PF00389">
    <property type="entry name" value="2-Hacid_dh"/>
    <property type="match status" value="1"/>
</dbReference>
<dbReference type="Pfam" id="PF02826">
    <property type="entry name" value="2-Hacid_dh_C"/>
    <property type="match status" value="1"/>
</dbReference>
<dbReference type="Pfam" id="PF01842">
    <property type="entry name" value="ACT"/>
    <property type="match status" value="1"/>
</dbReference>
<dbReference type="Pfam" id="PF19304">
    <property type="entry name" value="PGDH_inter"/>
    <property type="match status" value="1"/>
</dbReference>
<dbReference type="SUPFAM" id="SSF55021">
    <property type="entry name" value="ACT-like"/>
    <property type="match status" value="1"/>
</dbReference>
<dbReference type="SUPFAM" id="SSF52283">
    <property type="entry name" value="Formate/glycerate dehydrogenase catalytic domain-like"/>
    <property type="match status" value="1"/>
</dbReference>
<dbReference type="SUPFAM" id="SSF51735">
    <property type="entry name" value="NAD(P)-binding Rossmann-fold domains"/>
    <property type="match status" value="1"/>
</dbReference>
<dbReference type="SUPFAM" id="SSF143548">
    <property type="entry name" value="Serine metabolism enzymes domain"/>
    <property type="match status" value="1"/>
</dbReference>
<dbReference type="PROSITE" id="PS51671">
    <property type="entry name" value="ACT"/>
    <property type="match status" value="1"/>
</dbReference>
<dbReference type="PROSITE" id="PS00065">
    <property type="entry name" value="D_2_HYDROXYACID_DH_1"/>
    <property type="match status" value="1"/>
</dbReference>
<dbReference type="PROSITE" id="PS00670">
    <property type="entry name" value="D_2_HYDROXYACID_DH_2"/>
    <property type="match status" value="1"/>
</dbReference>
<dbReference type="PROSITE" id="PS00671">
    <property type="entry name" value="D_2_HYDROXYACID_DH_3"/>
    <property type="match status" value="1"/>
</dbReference>
<organism>
    <name type="scientific">Mycobacterium tuberculosis (strain CDC 1551 / Oshkosh)</name>
    <dbReference type="NCBI Taxonomy" id="83331"/>
    <lineage>
        <taxon>Bacteria</taxon>
        <taxon>Bacillati</taxon>
        <taxon>Actinomycetota</taxon>
        <taxon>Actinomycetes</taxon>
        <taxon>Mycobacteriales</taxon>
        <taxon>Mycobacteriaceae</taxon>
        <taxon>Mycobacterium</taxon>
        <taxon>Mycobacterium tuberculosis complex</taxon>
    </lineage>
</organism>
<evidence type="ECO:0000250" key="1"/>
<evidence type="ECO:0000250" key="2">
    <source>
        <dbReference type="UniProtKB" id="P0A9T0"/>
    </source>
</evidence>
<evidence type="ECO:0000255" key="3">
    <source>
        <dbReference type="PROSITE-ProRule" id="PRU01007"/>
    </source>
</evidence>
<evidence type="ECO:0000305" key="4"/>
<accession>P9WNX2</accession>
<accession>L0TBH1</accession>
<accession>O53243</accession>
<accession>P0A544</accession>
<comment type="function">
    <text evidence="2">Catalyzes the reversible oxidation of 3-phospho-D-glycerate to 3-phosphonooxypyruvate, the first step of the phosphorylated L-serine biosynthesis pathway. Also catalyzes the reversible oxidation of 2-hydroxyglutarate to 2-oxoglutarate.</text>
</comment>
<comment type="catalytic activity">
    <reaction evidence="2">
        <text>(2R)-3-phosphoglycerate + NAD(+) = 3-phosphooxypyruvate + NADH + H(+)</text>
        <dbReference type="Rhea" id="RHEA:12641"/>
        <dbReference type="ChEBI" id="CHEBI:15378"/>
        <dbReference type="ChEBI" id="CHEBI:18110"/>
        <dbReference type="ChEBI" id="CHEBI:57540"/>
        <dbReference type="ChEBI" id="CHEBI:57945"/>
        <dbReference type="ChEBI" id="CHEBI:58272"/>
        <dbReference type="EC" id="1.1.1.95"/>
    </reaction>
</comment>
<comment type="catalytic activity">
    <reaction evidence="2">
        <text>(R)-2-hydroxyglutarate + NAD(+) = 2-oxoglutarate + NADH + H(+)</text>
        <dbReference type="Rhea" id="RHEA:49612"/>
        <dbReference type="ChEBI" id="CHEBI:15378"/>
        <dbReference type="ChEBI" id="CHEBI:15801"/>
        <dbReference type="ChEBI" id="CHEBI:16810"/>
        <dbReference type="ChEBI" id="CHEBI:57540"/>
        <dbReference type="ChEBI" id="CHEBI:57945"/>
        <dbReference type="EC" id="1.1.1.399"/>
    </reaction>
</comment>
<comment type="pathway">
    <text>Amino-acid biosynthesis; L-serine biosynthesis; L-serine from 3-phospho-D-glycerate: step 1/3.</text>
</comment>
<comment type="similarity">
    <text evidence="4">Belongs to the D-isomer specific 2-hydroxyacid dehydrogenase family.</text>
</comment>
<gene>
    <name type="primary">serA</name>
    <name type="ordered locus">MT3074</name>
</gene>
<protein>
    <recommendedName>
        <fullName>D-3-phosphoglycerate dehydrogenase</fullName>
        <shortName>PGDH</shortName>
        <ecNumber evidence="2">1.1.1.95</ecNumber>
    </recommendedName>
    <alternativeName>
        <fullName evidence="2">2-oxoglutarate reductase</fullName>
        <ecNumber evidence="2">1.1.1.399</ecNumber>
    </alternativeName>
</protein>
<reference key="1">
    <citation type="journal article" date="2002" name="J. Bacteriol.">
        <title>Whole-genome comparison of Mycobacterium tuberculosis clinical and laboratory strains.</title>
        <authorList>
            <person name="Fleischmann R.D."/>
            <person name="Alland D."/>
            <person name="Eisen J.A."/>
            <person name="Carpenter L."/>
            <person name="White O."/>
            <person name="Peterson J.D."/>
            <person name="DeBoy R.T."/>
            <person name="Dodson R.J."/>
            <person name="Gwinn M.L."/>
            <person name="Haft D.H."/>
            <person name="Hickey E.K."/>
            <person name="Kolonay J.F."/>
            <person name="Nelson W.C."/>
            <person name="Umayam L.A."/>
            <person name="Ermolaeva M.D."/>
            <person name="Salzberg S.L."/>
            <person name="Delcher A."/>
            <person name="Utterback T.R."/>
            <person name="Weidman J.F."/>
            <person name="Khouri H.M."/>
            <person name="Gill J."/>
            <person name="Mikula A."/>
            <person name="Bishai W."/>
            <person name="Jacobs W.R. Jr."/>
            <person name="Venter J.C."/>
            <person name="Fraser C.M."/>
        </authorList>
    </citation>
    <scope>NUCLEOTIDE SEQUENCE [LARGE SCALE GENOMIC DNA]</scope>
    <source>
        <strain>CDC 1551 / Oshkosh</strain>
    </source>
</reference>
<feature type="chain" id="PRO_0000427052" description="D-3-phosphoglycerate dehydrogenase">
    <location>
        <begin position="1"/>
        <end position="528"/>
    </location>
</feature>
<feature type="domain" description="ACT" evidence="3">
    <location>
        <begin position="455"/>
        <end position="527"/>
    </location>
</feature>
<feature type="active site" evidence="1">
    <location>
        <position position="232"/>
    </location>
</feature>
<feature type="active site" evidence="1">
    <location>
        <position position="261"/>
    </location>
</feature>
<feature type="active site" description="Proton donor" evidence="1">
    <location>
        <position position="279"/>
    </location>
</feature>
<feature type="binding site" evidence="2">
    <location>
        <begin position="151"/>
        <end position="152"/>
    </location>
    <ligand>
        <name>NAD(+)</name>
        <dbReference type="ChEBI" id="CHEBI:57540"/>
    </ligand>
</feature>
<feature type="binding site" evidence="2">
    <location>
        <position position="171"/>
    </location>
    <ligand>
        <name>NAD(+)</name>
        <dbReference type="ChEBI" id="CHEBI:57540"/>
    </ligand>
</feature>
<feature type="binding site" evidence="2">
    <location>
        <begin position="230"/>
        <end position="232"/>
    </location>
    <ligand>
        <name>NAD(+)</name>
        <dbReference type="ChEBI" id="CHEBI:57540"/>
    </ligand>
</feature>
<feature type="binding site" evidence="2">
    <location>
        <position position="256"/>
    </location>
    <ligand>
        <name>NAD(+)</name>
        <dbReference type="ChEBI" id="CHEBI:57540"/>
    </ligand>
</feature>
<feature type="binding site" evidence="2">
    <location>
        <begin position="279"/>
        <end position="282"/>
    </location>
    <ligand>
        <name>NAD(+)</name>
        <dbReference type="ChEBI" id="CHEBI:57540"/>
    </ligand>
</feature>
<keyword id="KW-0028">Amino-acid biosynthesis</keyword>
<keyword id="KW-0520">NAD</keyword>
<keyword id="KW-0560">Oxidoreductase</keyword>
<keyword id="KW-1185">Reference proteome</keyword>
<keyword id="KW-0718">Serine biosynthesis</keyword>
<proteinExistence type="inferred from homology"/>